<sequence>MIFPMQQLIEFQGNIYEITCAATRRAFQLAAVCDPVLDELGGKVVSAAAQQVFSGTVDYRIEPQELG</sequence>
<evidence type="ECO:0000250" key="1"/>
<evidence type="ECO:0000305" key="2"/>
<accession>O83699</accession>
<gene>
    <name type="primary">rpoZ</name>
    <name type="ordered locus">TP_0701</name>
</gene>
<dbReference type="EC" id="2.7.7.6"/>
<dbReference type="EMBL" id="AE000520">
    <property type="protein sequence ID" value="AAC65670.1"/>
    <property type="molecule type" value="Genomic_DNA"/>
</dbReference>
<dbReference type="PIR" id="A71289">
    <property type="entry name" value="A71289"/>
</dbReference>
<dbReference type="RefSeq" id="WP_010882146.1">
    <property type="nucleotide sequence ID" value="NC_021490.2"/>
</dbReference>
<dbReference type="SMR" id="O83699"/>
<dbReference type="IntAct" id="O83699">
    <property type="interactions" value="3"/>
</dbReference>
<dbReference type="STRING" id="243276.TP_0701"/>
<dbReference type="EnsemblBacteria" id="AAC65670">
    <property type="protein sequence ID" value="AAC65670"/>
    <property type="gene ID" value="TP_0701"/>
</dbReference>
<dbReference type="KEGG" id="tpa:TP_0701"/>
<dbReference type="KEGG" id="tpw:TPANIC_0701"/>
<dbReference type="eggNOG" id="ENOG502ZVPX">
    <property type="taxonomic scope" value="Bacteria"/>
</dbReference>
<dbReference type="HOGENOM" id="CLU_187773_0_0_12"/>
<dbReference type="OrthoDB" id="308369at2"/>
<dbReference type="Proteomes" id="UP000000811">
    <property type="component" value="Chromosome"/>
</dbReference>
<dbReference type="GO" id="GO:0000428">
    <property type="term" value="C:DNA-directed RNA polymerase complex"/>
    <property type="evidence" value="ECO:0007669"/>
    <property type="project" value="UniProtKB-KW"/>
</dbReference>
<dbReference type="GO" id="GO:0003677">
    <property type="term" value="F:DNA binding"/>
    <property type="evidence" value="ECO:0007669"/>
    <property type="project" value="InterPro"/>
</dbReference>
<dbReference type="GO" id="GO:0003899">
    <property type="term" value="F:DNA-directed RNA polymerase activity"/>
    <property type="evidence" value="ECO:0007669"/>
    <property type="project" value="UniProtKB-EC"/>
</dbReference>
<dbReference type="GO" id="GO:0006351">
    <property type="term" value="P:DNA-templated transcription"/>
    <property type="evidence" value="ECO:0007669"/>
    <property type="project" value="InterPro"/>
</dbReference>
<dbReference type="InterPro" id="IPR006110">
    <property type="entry name" value="Pol_omega/Rpo6/RPB6"/>
</dbReference>
<dbReference type="InterPro" id="IPR036161">
    <property type="entry name" value="RPB6/omega-like_sf"/>
</dbReference>
<dbReference type="NCBIfam" id="NF001588">
    <property type="entry name" value="PRK00392.8-5"/>
    <property type="match status" value="1"/>
</dbReference>
<dbReference type="Pfam" id="PF01192">
    <property type="entry name" value="RNA_pol_Rpb6"/>
    <property type="match status" value="1"/>
</dbReference>
<dbReference type="SMART" id="SM01409">
    <property type="entry name" value="RNA_pol_Rpb6"/>
    <property type="match status" value="1"/>
</dbReference>
<dbReference type="SUPFAM" id="SSF63562">
    <property type="entry name" value="RPB6/omega subunit-like"/>
    <property type="match status" value="1"/>
</dbReference>
<proteinExistence type="inferred from homology"/>
<organism>
    <name type="scientific">Treponema pallidum (strain Nichols)</name>
    <dbReference type="NCBI Taxonomy" id="243276"/>
    <lineage>
        <taxon>Bacteria</taxon>
        <taxon>Pseudomonadati</taxon>
        <taxon>Spirochaetota</taxon>
        <taxon>Spirochaetia</taxon>
        <taxon>Spirochaetales</taxon>
        <taxon>Treponemataceae</taxon>
        <taxon>Treponema</taxon>
    </lineage>
</organism>
<name>RPOZ_TREPA</name>
<feature type="chain" id="PRO_0000129006" description="DNA-directed RNA polymerase subunit omega">
    <location>
        <begin position="1"/>
        <end position="67"/>
    </location>
</feature>
<comment type="function">
    <text evidence="1">Promotes RNA polymerase assembly. Latches the N- and C-terminal regions of the beta' subunit thereby facilitating its interaction with the beta and alpha subunits (By similarity).</text>
</comment>
<comment type="catalytic activity">
    <reaction>
        <text>RNA(n) + a ribonucleoside 5'-triphosphate = RNA(n+1) + diphosphate</text>
        <dbReference type="Rhea" id="RHEA:21248"/>
        <dbReference type="Rhea" id="RHEA-COMP:14527"/>
        <dbReference type="Rhea" id="RHEA-COMP:17342"/>
        <dbReference type="ChEBI" id="CHEBI:33019"/>
        <dbReference type="ChEBI" id="CHEBI:61557"/>
        <dbReference type="ChEBI" id="CHEBI:140395"/>
        <dbReference type="EC" id="2.7.7.6"/>
    </reaction>
</comment>
<comment type="subunit">
    <text evidence="1">The RNAP catalytic core consists of 2 alpha, 1 beta, 1 beta' and 1 omega subunit. When a sigma factor is associated with the core the holoenzyme is formed, which can initiate transcription (By similarity).</text>
</comment>
<comment type="similarity">
    <text evidence="2">Belongs to the RNA polymerase subunit omega family.</text>
</comment>
<protein>
    <recommendedName>
        <fullName>DNA-directed RNA polymerase subunit omega</fullName>
        <shortName>RNAP omega subunit</shortName>
        <ecNumber>2.7.7.6</ecNumber>
    </recommendedName>
    <alternativeName>
        <fullName>RNA polymerase omega subunit</fullName>
    </alternativeName>
    <alternativeName>
        <fullName>Transcriptase subunit omega</fullName>
    </alternativeName>
</protein>
<keyword id="KW-0240">DNA-directed RNA polymerase</keyword>
<keyword id="KW-0548">Nucleotidyltransferase</keyword>
<keyword id="KW-1185">Reference proteome</keyword>
<keyword id="KW-0804">Transcription</keyword>
<keyword id="KW-0808">Transferase</keyword>
<reference key="1">
    <citation type="journal article" date="1998" name="Science">
        <title>Complete genome sequence of Treponema pallidum, the syphilis spirochete.</title>
        <authorList>
            <person name="Fraser C.M."/>
            <person name="Norris S.J."/>
            <person name="Weinstock G.M."/>
            <person name="White O."/>
            <person name="Sutton G.G."/>
            <person name="Dodson R.J."/>
            <person name="Gwinn M.L."/>
            <person name="Hickey E.K."/>
            <person name="Clayton R.A."/>
            <person name="Ketchum K.A."/>
            <person name="Sodergren E."/>
            <person name="Hardham J.M."/>
            <person name="McLeod M.P."/>
            <person name="Salzberg S.L."/>
            <person name="Peterson J.D."/>
            <person name="Khalak H.G."/>
            <person name="Richardson D.L."/>
            <person name="Howell J.K."/>
            <person name="Chidambaram M."/>
            <person name="Utterback T.R."/>
            <person name="McDonald L.A."/>
            <person name="Artiach P."/>
            <person name="Bowman C."/>
            <person name="Cotton M.D."/>
            <person name="Fujii C."/>
            <person name="Garland S.A."/>
            <person name="Hatch B."/>
            <person name="Horst K."/>
            <person name="Roberts K.M."/>
            <person name="Sandusky M."/>
            <person name="Weidman J.F."/>
            <person name="Smith H.O."/>
            <person name="Venter J.C."/>
        </authorList>
    </citation>
    <scope>NUCLEOTIDE SEQUENCE [LARGE SCALE GENOMIC DNA]</scope>
    <source>
        <strain>Nichols</strain>
    </source>
</reference>